<dbReference type="EC" id="2.1.1.-" evidence="1"/>
<dbReference type="EMBL" id="AL935263">
    <property type="protein sequence ID" value="CCC80228.1"/>
    <property type="molecule type" value="Genomic_DNA"/>
</dbReference>
<dbReference type="RefSeq" id="WP_011102076.1">
    <property type="nucleotide sequence ID" value="NC_004567.2"/>
</dbReference>
<dbReference type="RefSeq" id="YP_004890742.1">
    <property type="nucleotide sequence ID" value="NC_004567.2"/>
</dbReference>
<dbReference type="SMR" id="Q88T09"/>
<dbReference type="STRING" id="220668.lp_3201"/>
<dbReference type="EnsemblBacteria" id="CCC80228">
    <property type="protein sequence ID" value="CCC80228"/>
    <property type="gene ID" value="lp_3201"/>
</dbReference>
<dbReference type="GeneID" id="77216322"/>
<dbReference type="KEGG" id="lpl:lp_3201"/>
<dbReference type="PATRIC" id="fig|220668.9.peg.2676"/>
<dbReference type="eggNOG" id="COG0357">
    <property type="taxonomic scope" value="Bacteria"/>
</dbReference>
<dbReference type="HOGENOM" id="CLU_065341_0_2_9"/>
<dbReference type="OrthoDB" id="9808773at2"/>
<dbReference type="PhylomeDB" id="Q88T09"/>
<dbReference type="Proteomes" id="UP000000432">
    <property type="component" value="Chromosome"/>
</dbReference>
<dbReference type="GO" id="GO:0005829">
    <property type="term" value="C:cytosol"/>
    <property type="evidence" value="ECO:0007669"/>
    <property type="project" value="TreeGrafter"/>
</dbReference>
<dbReference type="GO" id="GO:0070043">
    <property type="term" value="F:rRNA (guanine-N7-)-methyltransferase activity"/>
    <property type="evidence" value="ECO:0007669"/>
    <property type="project" value="UniProtKB-UniRule"/>
</dbReference>
<dbReference type="CDD" id="cd02440">
    <property type="entry name" value="AdoMet_MTases"/>
    <property type="match status" value="1"/>
</dbReference>
<dbReference type="FunFam" id="3.40.50.150:FF:000041">
    <property type="entry name" value="Ribosomal RNA small subunit methyltransferase G"/>
    <property type="match status" value="1"/>
</dbReference>
<dbReference type="Gene3D" id="3.40.50.150">
    <property type="entry name" value="Vaccinia Virus protein VP39"/>
    <property type="match status" value="1"/>
</dbReference>
<dbReference type="HAMAP" id="MF_00074">
    <property type="entry name" value="16SrRNA_methyltr_G"/>
    <property type="match status" value="1"/>
</dbReference>
<dbReference type="InterPro" id="IPR003682">
    <property type="entry name" value="rRNA_ssu_MeTfrase_G"/>
</dbReference>
<dbReference type="InterPro" id="IPR029063">
    <property type="entry name" value="SAM-dependent_MTases_sf"/>
</dbReference>
<dbReference type="NCBIfam" id="TIGR00138">
    <property type="entry name" value="rsmG_gidB"/>
    <property type="match status" value="1"/>
</dbReference>
<dbReference type="PANTHER" id="PTHR31760">
    <property type="entry name" value="S-ADENOSYL-L-METHIONINE-DEPENDENT METHYLTRANSFERASES SUPERFAMILY PROTEIN"/>
    <property type="match status" value="1"/>
</dbReference>
<dbReference type="PANTHER" id="PTHR31760:SF0">
    <property type="entry name" value="S-ADENOSYL-L-METHIONINE-DEPENDENT METHYLTRANSFERASES SUPERFAMILY PROTEIN"/>
    <property type="match status" value="1"/>
</dbReference>
<dbReference type="Pfam" id="PF02527">
    <property type="entry name" value="GidB"/>
    <property type="match status" value="1"/>
</dbReference>
<dbReference type="PIRSF" id="PIRSF003078">
    <property type="entry name" value="GidB"/>
    <property type="match status" value="1"/>
</dbReference>
<dbReference type="SUPFAM" id="SSF53335">
    <property type="entry name" value="S-adenosyl-L-methionine-dependent methyltransferases"/>
    <property type="match status" value="1"/>
</dbReference>
<comment type="function">
    <text evidence="1">Specifically methylates the N7 position of a guanine in 16S rRNA.</text>
</comment>
<comment type="subcellular location">
    <subcellularLocation>
        <location evidence="1">Cytoplasm</location>
    </subcellularLocation>
</comment>
<comment type="similarity">
    <text evidence="1">Belongs to the methyltransferase superfamily. RNA methyltransferase RsmG family.</text>
</comment>
<feature type="chain" id="PRO_0000184268" description="Ribosomal RNA small subunit methyltransferase G">
    <location>
        <begin position="1"/>
        <end position="244"/>
    </location>
</feature>
<feature type="region of interest" description="Disordered" evidence="2">
    <location>
        <begin position="221"/>
        <end position="244"/>
    </location>
</feature>
<feature type="binding site" evidence="1">
    <location>
        <position position="79"/>
    </location>
    <ligand>
        <name>S-adenosyl-L-methionine</name>
        <dbReference type="ChEBI" id="CHEBI:59789"/>
    </ligand>
</feature>
<feature type="binding site" evidence="1">
    <location>
        <position position="84"/>
    </location>
    <ligand>
        <name>S-adenosyl-L-methionine</name>
        <dbReference type="ChEBI" id="CHEBI:59789"/>
    </ligand>
</feature>
<feature type="binding site" evidence="1">
    <location>
        <begin position="130"/>
        <end position="131"/>
    </location>
    <ligand>
        <name>S-adenosyl-L-methionine</name>
        <dbReference type="ChEBI" id="CHEBI:59789"/>
    </ligand>
</feature>
<feature type="binding site" evidence="1">
    <location>
        <position position="150"/>
    </location>
    <ligand>
        <name>S-adenosyl-L-methionine</name>
        <dbReference type="ChEBI" id="CHEBI:59789"/>
    </ligand>
</feature>
<keyword id="KW-0963">Cytoplasm</keyword>
<keyword id="KW-0489">Methyltransferase</keyword>
<keyword id="KW-1185">Reference proteome</keyword>
<keyword id="KW-0698">rRNA processing</keyword>
<keyword id="KW-0949">S-adenosyl-L-methionine</keyword>
<keyword id="KW-0808">Transferase</keyword>
<evidence type="ECO:0000255" key="1">
    <source>
        <dbReference type="HAMAP-Rule" id="MF_00074"/>
    </source>
</evidence>
<evidence type="ECO:0000256" key="2">
    <source>
        <dbReference type="SAM" id="MobiDB-lite"/>
    </source>
</evidence>
<proteinExistence type="inferred from homology"/>
<sequence length="244" mass="26757">MNPEEFKQALAQHEIALTAKQLAQFALYFQLLVTTNKQFNLTTITAEPEVYLKHFYDSLTPAFYVPALRDQPLTICDVGAGAGFPSIPLKIAFPQLQVTIVDSLNKRINFLNDLVQQLGLTGVKTFHDRAETFAGKKSAHRESYDIATARAVARLSVLSELCLPLVKIGGQMIALKAANASTETAEGTYAVQQLGGQIVQDEAFSLPVTADPRHIIVIDKKKPSPKRYPRKPGTPAKQPLTAPM</sequence>
<name>RSMG_LACPL</name>
<organism>
    <name type="scientific">Lactiplantibacillus plantarum (strain ATCC BAA-793 / NCIMB 8826 / WCFS1)</name>
    <name type="common">Lactobacillus plantarum</name>
    <dbReference type="NCBI Taxonomy" id="220668"/>
    <lineage>
        <taxon>Bacteria</taxon>
        <taxon>Bacillati</taxon>
        <taxon>Bacillota</taxon>
        <taxon>Bacilli</taxon>
        <taxon>Lactobacillales</taxon>
        <taxon>Lactobacillaceae</taxon>
        <taxon>Lactiplantibacillus</taxon>
    </lineage>
</organism>
<protein>
    <recommendedName>
        <fullName evidence="1">Ribosomal RNA small subunit methyltransferase G</fullName>
        <ecNumber evidence="1">2.1.1.-</ecNumber>
    </recommendedName>
    <alternativeName>
        <fullName evidence="1">16S rRNA 7-methylguanosine methyltransferase</fullName>
        <shortName evidence="1">16S rRNA m7G methyltransferase</shortName>
    </alternativeName>
</protein>
<accession>Q88T09</accession>
<accession>F9UTB0</accession>
<gene>
    <name evidence="1" type="primary">rsmG</name>
    <name type="ordered locus">lp_3201</name>
</gene>
<reference key="1">
    <citation type="journal article" date="2003" name="Proc. Natl. Acad. Sci. U.S.A.">
        <title>Complete genome sequence of Lactobacillus plantarum WCFS1.</title>
        <authorList>
            <person name="Kleerebezem M."/>
            <person name="Boekhorst J."/>
            <person name="van Kranenburg R."/>
            <person name="Molenaar D."/>
            <person name="Kuipers O.P."/>
            <person name="Leer R."/>
            <person name="Tarchini R."/>
            <person name="Peters S.A."/>
            <person name="Sandbrink H.M."/>
            <person name="Fiers M.W.E.J."/>
            <person name="Stiekema W."/>
            <person name="Klein Lankhorst R.M."/>
            <person name="Bron P.A."/>
            <person name="Hoffer S.M."/>
            <person name="Nierop Groot M.N."/>
            <person name="Kerkhoven R."/>
            <person name="De Vries M."/>
            <person name="Ursing B."/>
            <person name="De Vos W.M."/>
            <person name="Siezen R.J."/>
        </authorList>
    </citation>
    <scope>NUCLEOTIDE SEQUENCE [LARGE SCALE GENOMIC DNA]</scope>
    <source>
        <strain>ATCC BAA-793 / NCIMB 8826 / WCFS1</strain>
    </source>
</reference>
<reference key="2">
    <citation type="journal article" date="2012" name="J. Bacteriol.">
        <title>Complete resequencing and reannotation of the Lactobacillus plantarum WCFS1 genome.</title>
        <authorList>
            <person name="Siezen R.J."/>
            <person name="Francke C."/>
            <person name="Renckens B."/>
            <person name="Boekhorst J."/>
            <person name="Wels M."/>
            <person name="Kleerebezem M."/>
            <person name="van Hijum S.A."/>
        </authorList>
    </citation>
    <scope>NUCLEOTIDE SEQUENCE [LARGE SCALE GENOMIC DNA]</scope>
    <scope>GENOME REANNOTATION</scope>
    <source>
        <strain>ATCC BAA-793 / NCIMB 8826 / WCFS1</strain>
    </source>
</reference>